<reference key="1">
    <citation type="online journal article" date="1998" name="Plant Gene Register">
        <title>Cloning and partial characterization of two putative cyclic nucleotide-regulated ion channels from Arabidopsis thaliana, designated CNGC1 and CNGC2.</title>
        <authorList>
            <person name="Koehler C."/>
            <person name="Neuhaus G."/>
        </authorList>
        <locator>PGR98-062</locator>
    </citation>
    <scope>NUCLEOTIDE SEQUENCE [GENOMIC DNA]</scope>
    <scope>CHARACTERIZATION</scope>
    <source>
        <strain>cv. Columbia</strain>
    </source>
</reference>
<reference key="2">
    <citation type="journal article" date="1999" name="Plant Physiol.">
        <title>Cloning and first functional characterization of a plant cyclic nucleotide-gated cation channel.</title>
        <authorList>
            <person name="Leng Q."/>
            <person name="Mercier R.W."/>
            <person name="Yao W."/>
            <person name="Berkowitz G.A."/>
        </authorList>
    </citation>
    <scope>NUCLEOTIDE SEQUENCE [MRNA]</scope>
    <scope>CHARACTERIZATION</scope>
    <source>
        <strain>cv. Columbia</strain>
    </source>
</reference>
<reference key="3">
    <citation type="journal article" date="2000" name="Proc. Natl. Acad. Sci. U.S.A.">
        <title>The Arabidopsis dnd1 'defense, no death' gene encodes a mutated cyclic nucleotide-gated ion channel.</title>
        <authorList>
            <person name="Clough S.J."/>
            <person name="Fengler K.A."/>
            <person name="Yu I.-C."/>
            <person name="Lippok B."/>
            <person name="Smith R.K. Jr."/>
            <person name="Bent A.F."/>
        </authorList>
    </citation>
    <scope>NUCLEOTIDE SEQUENCE [GENOMIC DNA]</scope>
    <scope>FUNCTION</scope>
    <scope>MUTANT DND1-1</scope>
    <source>
        <strain>cv. Columbia</strain>
    </source>
</reference>
<reference key="4">
    <citation type="journal article" date="2000" name="Nature">
        <title>Sequence and analysis of chromosome 5 of the plant Arabidopsis thaliana.</title>
        <authorList>
            <person name="Tabata S."/>
            <person name="Kaneko T."/>
            <person name="Nakamura Y."/>
            <person name="Kotani H."/>
            <person name="Kato T."/>
            <person name="Asamizu E."/>
            <person name="Miyajima N."/>
            <person name="Sasamoto S."/>
            <person name="Kimura T."/>
            <person name="Hosouchi T."/>
            <person name="Kawashima K."/>
            <person name="Kohara M."/>
            <person name="Matsumoto M."/>
            <person name="Matsuno A."/>
            <person name="Muraki A."/>
            <person name="Nakayama S."/>
            <person name="Nakazaki N."/>
            <person name="Naruo K."/>
            <person name="Okumura S."/>
            <person name="Shinpo S."/>
            <person name="Takeuchi C."/>
            <person name="Wada T."/>
            <person name="Watanabe A."/>
            <person name="Yamada M."/>
            <person name="Yasuda M."/>
            <person name="Sato S."/>
            <person name="de la Bastide M."/>
            <person name="Huang E."/>
            <person name="Spiegel L."/>
            <person name="Gnoj L."/>
            <person name="O'Shaughnessy A."/>
            <person name="Preston R."/>
            <person name="Habermann K."/>
            <person name="Murray J."/>
            <person name="Johnson D."/>
            <person name="Rohlfing T."/>
            <person name="Nelson J."/>
            <person name="Stoneking T."/>
            <person name="Pepin K."/>
            <person name="Spieth J."/>
            <person name="Sekhon M."/>
            <person name="Armstrong J."/>
            <person name="Becker M."/>
            <person name="Belter E."/>
            <person name="Cordum H."/>
            <person name="Cordes M."/>
            <person name="Courtney L."/>
            <person name="Courtney W."/>
            <person name="Dante M."/>
            <person name="Du H."/>
            <person name="Edwards J."/>
            <person name="Fryman J."/>
            <person name="Haakensen B."/>
            <person name="Lamar E."/>
            <person name="Latreille P."/>
            <person name="Leonard S."/>
            <person name="Meyer R."/>
            <person name="Mulvaney E."/>
            <person name="Ozersky P."/>
            <person name="Riley A."/>
            <person name="Strowmatt C."/>
            <person name="Wagner-McPherson C."/>
            <person name="Wollam A."/>
            <person name="Yoakum M."/>
            <person name="Bell M."/>
            <person name="Dedhia N."/>
            <person name="Parnell L."/>
            <person name="Shah R."/>
            <person name="Rodriguez M."/>
            <person name="Hoon See L."/>
            <person name="Vil D."/>
            <person name="Baker J."/>
            <person name="Kirchoff K."/>
            <person name="Toth K."/>
            <person name="King L."/>
            <person name="Bahret A."/>
            <person name="Miller B."/>
            <person name="Marra M.A."/>
            <person name="Martienssen R."/>
            <person name="McCombie W.R."/>
            <person name="Wilson R.K."/>
            <person name="Murphy G."/>
            <person name="Bancroft I."/>
            <person name="Volckaert G."/>
            <person name="Wambutt R."/>
            <person name="Duesterhoeft A."/>
            <person name="Stiekema W."/>
            <person name="Pohl T."/>
            <person name="Entian K.-D."/>
            <person name="Terryn N."/>
            <person name="Hartley N."/>
            <person name="Bent E."/>
            <person name="Johnson S."/>
            <person name="Langham S.-A."/>
            <person name="McCullagh B."/>
            <person name="Robben J."/>
            <person name="Grymonprez B."/>
            <person name="Zimmermann W."/>
            <person name="Ramsperger U."/>
            <person name="Wedler H."/>
            <person name="Balke K."/>
            <person name="Wedler E."/>
            <person name="Peters S."/>
            <person name="van Staveren M."/>
            <person name="Dirkse W."/>
            <person name="Mooijman P."/>
            <person name="Klein Lankhorst R."/>
            <person name="Weitzenegger T."/>
            <person name="Bothe G."/>
            <person name="Rose M."/>
            <person name="Hauf J."/>
            <person name="Berneiser S."/>
            <person name="Hempel S."/>
            <person name="Feldpausch M."/>
            <person name="Lamberth S."/>
            <person name="Villarroel R."/>
            <person name="Gielen J."/>
            <person name="Ardiles W."/>
            <person name="Bents O."/>
            <person name="Lemcke K."/>
            <person name="Kolesov G."/>
            <person name="Mayer K.F.X."/>
            <person name="Rudd S."/>
            <person name="Schoof H."/>
            <person name="Schueller C."/>
            <person name="Zaccaria P."/>
            <person name="Mewes H.-W."/>
            <person name="Bevan M."/>
            <person name="Fransz P.F."/>
        </authorList>
    </citation>
    <scope>NUCLEOTIDE SEQUENCE [LARGE SCALE GENOMIC DNA]</scope>
    <source>
        <strain>cv. Columbia</strain>
    </source>
</reference>
<reference key="5">
    <citation type="journal article" date="2017" name="Plant J.">
        <title>Araport11: a complete reannotation of the Arabidopsis thaliana reference genome.</title>
        <authorList>
            <person name="Cheng C.Y."/>
            <person name="Krishnakumar V."/>
            <person name="Chan A.P."/>
            <person name="Thibaud-Nissen F."/>
            <person name="Schobel S."/>
            <person name="Town C.D."/>
        </authorList>
    </citation>
    <scope>GENOME REANNOTATION</scope>
    <source>
        <strain>cv. Columbia</strain>
    </source>
</reference>
<reference key="6">
    <citation type="journal article" date="1999" name="Plant J.">
        <title>Characterisation of a novel gene family of putative cyclic nucleotide- and calmodulin-regulated ion channels in Arabidopsis thaliana.</title>
        <authorList>
            <person name="Koehler C."/>
            <person name="Merkle T."/>
            <person name="Neuhaus G."/>
        </authorList>
    </citation>
    <scope>INTERACTION WITH CALMODULIN</scope>
</reference>
<reference key="7">
    <citation type="journal article" date="2000" name="FEBS Lett.">
        <title>Characterisation of calmodulin binding to cyclic nucleotide-gated ion channels from Arabidopsis thaliana.</title>
        <authorList>
            <person name="Koehler C."/>
            <person name="Neuhaus G."/>
        </authorList>
    </citation>
    <scope>CALMODULIN-BINDING DOMAIN</scope>
</reference>
<reference key="8">
    <citation type="journal article" date="2001" name="Planta">
        <title>Developmentally regulated expression of a cyclic nucleotide-gated ion channel from Arabidopsis indicates its involvement in programmed cell death.</title>
        <authorList>
            <person name="Koehler C."/>
            <person name="Merkle T."/>
            <person name="Roby D."/>
            <person name="Neuhaus G."/>
        </authorList>
    </citation>
    <scope>FUNCTION</scope>
    <scope>TISSUE SPECIFICITY</scope>
    <scope>INDUCTION</scope>
</reference>
<reference key="9">
    <citation type="journal article" date="2001" name="Plant Physiol.">
        <title>Phylogenetic relationships within cation transporter families of Arabidopsis.</title>
        <authorList>
            <person name="Maeser P."/>
            <person name="Thomine S."/>
            <person name="Schroeder J.I."/>
            <person name="Ward J.M."/>
            <person name="Hirschi K."/>
            <person name="Sze H."/>
            <person name="Talke I.N."/>
            <person name="Amtmann A."/>
            <person name="Maathuis F.J.M."/>
            <person name="Sanders D."/>
            <person name="Harper J.F."/>
            <person name="Tchieu J."/>
            <person name="Gribskov M."/>
            <person name="Persans M.W."/>
            <person name="Salt D.E."/>
            <person name="Kim S.A."/>
            <person name="Guerinot M.L."/>
        </authorList>
    </citation>
    <scope>GENE FAMILY</scope>
    <scope>NOMENCLATURE</scope>
</reference>
<reference key="10">
    <citation type="journal article" date="2003" name="Plant Physiol.">
        <title>A cyclic nucleotide-gated ion channel, CNGC2, is crucial for plant development and adaptation to calcium stress.</title>
        <authorList>
            <person name="Chan C.W.M."/>
            <person name="Schorrak L.M."/>
            <person name="Smith R.K. Jr."/>
            <person name="Bent A.F."/>
            <person name="Sussman M.R."/>
        </authorList>
    </citation>
    <scope>NULL MUTANTS</scope>
</reference>
<proteinExistence type="evidence at protein level"/>
<name>CNGC2_ARATH</name>
<accession>O65718</accession>
<feature type="chain" id="PRO_0000219330" description="Cyclic nucleotide-gated ion channel 2">
    <location>
        <begin position="1"/>
        <end position="726"/>
    </location>
</feature>
<feature type="topological domain" description="Cytoplasmic" evidence="2">
    <location>
        <begin position="1"/>
        <end position="127"/>
    </location>
</feature>
<feature type="transmembrane region" description="Helical; Name=H1" evidence="2">
    <location>
        <begin position="128"/>
        <end position="148"/>
    </location>
</feature>
<feature type="topological domain" description="Extracellular" evidence="2">
    <location>
        <begin position="149"/>
        <end position="162"/>
    </location>
</feature>
<feature type="transmembrane region" description="Helical; Name=H2" evidence="2">
    <location>
        <begin position="163"/>
        <end position="183"/>
    </location>
</feature>
<feature type="topological domain" description="Cytoplasmic" evidence="2">
    <location>
        <begin position="184"/>
        <end position="219"/>
    </location>
</feature>
<feature type="transmembrane region" description="Helical; Name=H3" evidence="2">
    <location>
        <begin position="220"/>
        <end position="240"/>
    </location>
</feature>
<feature type="topological domain" description="Extracellular" evidence="2">
    <location>
        <begin position="241"/>
        <end position="254"/>
    </location>
</feature>
<feature type="transmembrane region" description="Helical; Name=H4" evidence="2">
    <location>
        <begin position="255"/>
        <end position="275"/>
    </location>
</feature>
<feature type="topological domain" description="Cytoplasmic" evidence="2">
    <location>
        <begin position="276"/>
        <end position="282"/>
    </location>
</feature>
<feature type="transmembrane region" description="Helical; Name=H5" evidence="2">
    <location>
        <begin position="283"/>
        <end position="303"/>
    </location>
</feature>
<feature type="topological domain" description="Extracellular" evidence="2">
    <location>
        <begin position="304"/>
        <end position="424"/>
    </location>
</feature>
<feature type="transmembrane region" description="Helical; Name=H6" evidence="2">
    <location>
        <begin position="425"/>
        <end position="445"/>
    </location>
</feature>
<feature type="topological domain" description="Cytoplasmic" evidence="2">
    <location>
        <begin position="446"/>
        <end position="726"/>
    </location>
</feature>
<feature type="domain" description="IQ">
    <location>
        <begin position="666"/>
        <end position="695"/>
    </location>
</feature>
<feature type="region of interest" description="Disordered" evidence="3">
    <location>
        <begin position="26"/>
        <end position="46"/>
    </location>
</feature>
<feature type="region of interest" description="Calmodulin-binding" evidence="1">
    <location>
        <begin position="645"/>
        <end position="661"/>
    </location>
</feature>
<feature type="compositionally biased region" description="Low complexity" evidence="3">
    <location>
        <begin position="36"/>
        <end position="45"/>
    </location>
</feature>
<feature type="binding site">
    <location>
        <begin position="531"/>
        <end position="661"/>
    </location>
    <ligand>
        <name>a nucleoside 3',5'-cyclic phosphate</name>
        <dbReference type="ChEBI" id="CHEBI:58464"/>
    </ligand>
</feature>
<feature type="binding site" evidence="1">
    <location>
        <position position="600"/>
    </location>
    <ligand>
        <name>a nucleoside 3',5'-cyclic phosphate</name>
        <dbReference type="ChEBI" id="CHEBI:58464"/>
    </ligand>
</feature>
<comment type="function">
    <text evidence="4 5">Acts as a cyclic nucleotide-gated ion channel. Permeable to potassium and calcium in a cyclic nucleotide-dependent fashion (cAMP or cGMP). Could also transport lithium, cesium and rubium and displays a strong selectivity against sodium. Seems to directly participate in pathogen-induced calcium influx. May function in homeostasis, re-establishing ionic balance after defense action and/or other stimuli. Could mediate the initiation of the developmentally regulated cell death programs.</text>
</comment>
<comment type="subunit">
    <text evidence="6">Homotetramer or heterotetramer (Potential). Binds calmodulin-1/4 with a higher affinity than calmodulin-2/3/5.</text>
</comment>
<comment type="subcellular location">
    <subcellularLocation>
        <location evidence="6">Cell membrane</location>
        <topology evidence="6">Multi-pass membrane protein</topology>
    </subcellularLocation>
</comment>
<comment type="alternative products">
    <event type="alternative splicing"/>
    <isoform>
        <id>O65718-1</id>
        <name>1</name>
        <sequence type="displayed"/>
    </isoform>
    <text>A number of isoforms are produced. According to EST sequences.</text>
</comment>
<comment type="tissue specificity">
    <text evidence="5">Expressed in the whole plant but only weakly in roots. Strongly expressed in the expanded cotyledons of 14-day-old seedlings and detected later in leaves after the transition to flowering. Also detected in flowers during organ senescence and in the dehiscence zone of siliques.</text>
</comment>
<comment type="induction">
    <text evidence="5">Up-regulated by light. Transiently induced during leaf and culture senescence.</text>
</comment>
<comment type="domain">
    <text evidence="1">The binding of calmodulin to the C-terminus might interfere with cyclic nucleotide binding and thus channel activation.</text>
</comment>
<comment type="miscellaneous">
    <text>Loss-of-function mutations cngc2-1 (dnd1-1) or cncg2-2 results in the loss of the hypersensitive response and leads to a broad spectrum disease resistance. These mutations lead to a specific and dramatic calcium hypersensitivity that results in severe reductions in plant size and seed yield.</text>
</comment>
<comment type="similarity">
    <text evidence="6">Belongs to the cyclic nucleotide-gated cation channel (TC 1.A.1.5) family.</text>
</comment>
<keyword id="KW-0025">Alternative splicing</keyword>
<keyword id="KW-0112">Calmodulin-binding</keyword>
<keyword id="KW-0114">cAMP</keyword>
<keyword id="KW-0116">cAMP-binding</keyword>
<keyword id="KW-1003">Cell membrane</keyword>
<keyword id="KW-0140">cGMP</keyword>
<keyword id="KW-0142">cGMP-binding</keyword>
<keyword id="KW-0407">Ion channel</keyword>
<keyword id="KW-0406">Ion transport</keyword>
<keyword id="KW-1071">Ligand-gated ion channel</keyword>
<keyword id="KW-0472">Membrane</keyword>
<keyword id="KW-0547">Nucleotide-binding</keyword>
<keyword id="KW-0611">Plant defense</keyword>
<keyword id="KW-1185">Reference proteome</keyword>
<keyword id="KW-0812">Transmembrane</keyword>
<keyword id="KW-1133">Transmembrane helix</keyword>
<keyword id="KW-0813">Transport</keyword>
<evidence type="ECO:0000250" key="1"/>
<evidence type="ECO:0000255" key="2"/>
<evidence type="ECO:0000256" key="3">
    <source>
        <dbReference type="SAM" id="MobiDB-lite"/>
    </source>
</evidence>
<evidence type="ECO:0000269" key="4">
    <source>
    </source>
</evidence>
<evidence type="ECO:0000269" key="5">
    <source>
    </source>
</evidence>
<evidence type="ECO:0000305" key="6"/>
<sequence length="726" mass="83241">MPSHPNFIFRWIGLFSDKFRRQTTGIDENSNLQINGGDSSSSGSDETPVLSSVECYACTQVGVPAFHSTSCDQAHAPEWRASAGSSLVPIQEGSVPNPARTRFRRLKGPFGEVLDPRSKRVQRWNRALLLARGMALAVDPLFFYALSIGRTTGPACLYMDGAFAAVVTVLRTCLDAVHLWHVWLQFRLAYVSRESLVVGCGKLVWDPRAIASHYARSLTGFWFDVIVILPVPQAVFWLVVPKLIREEKVKLIMTILLLIFLFQFLPKIYHCICLMRRMQKVTGYIFGTIWWGFALNLIAYFIASHVAGGCWYVLAIQRVASCIRQQCMRTGNCNLSLACKEEVCYQFVSPTSTVGYPCLSGNLTSVVNKPMCLDSNGPFRYGIYRWALPVISSNSLAVKILYPIFWGLMTLSTFANDLEPTSNWLEVIFSIVMVLSGLLLFTLLIGNIQVFLHAVMAKKRKMQIRCRDMEWWMKRRQLPSRLRQRVRRFERQRWNALGGEDELELIHDLPPGLRRDIKRYLCFDLINKVPLFRGMDDLILDNICDRAKPRVFSKDEKIIREGDPVQRMIFIMRGRVKRIQSLSKGVLATSTLEPGGYLGDELLSWCLRRPFLDRLPPSSATFVCLENIEAFSLGSEDLRYITDHFRYKFANERLKRTARYYSSNWRTWAAVNIQMAWRRRRKRTRGENIGGSMSPVSENSIEGNSERRLLQYAAMFMSIRPHDHLE</sequence>
<protein>
    <recommendedName>
        <fullName>Cyclic nucleotide-gated ion channel 2</fullName>
        <shortName>AtCNGC2</shortName>
    </recommendedName>
    <alternativeName>
        <fullName>Cyclic nucleotide- and calmodulin-regulated ion channel 2</fullName>
    </alternativeName>
    <alternativeName>
        <fullName>Protein DEFENSE NO DEATH 1</fullName>
    </alternativeName>
</protein>
<organism>
    <name type="scientific">Arabidopsis thaliana</name>
    <name type="common">Mouse-ear cress</name>
    <dbReference type="NCBI Taxonomy" id="3702"/>
    <lineage>
        <taxon>Eukaryota</taxon>
        <taxon>Viridiplantae</taxon>
        <taxon>Streptophyta</taxon>
        <taxon>Embryophyta</taxon>
        <taxon>Tracheophyta</taxon>
        <taxon>Spermatophyta</taxon>
        <taxon>Magnoliopsida</taxon>
        <taxon>eudicotyledons</taxon>
        <taxon>Gunneridae</taxon>
        <taxon>Pentapetalae</taxon>
        <taxon>rosids</taxon>
        <taxon>malvids</taxon>
        <taxon>Brassicales</taxon>
        <taxon>Brassicaceae</taxon>
        <taxon>Camelineae</taxon>
        <taxon>Arabidopsis</taxon>
    </lineage>
</organism>
<dbReference type="EMBL" id="Y16328">
    <property type="protein sequence ID" value="CAA76179.1"/>
    <property type="molecule type" value="Genomic_DNA"/>
</dbReference>
<dbReference type="EMBL" id="AF067798">
    <property type="protein sequence ID" value="AAC78613.1"/>
    <property type="molecule type" value="mRNA"/>
</dbReference>
<dbReference type="EMBL" id="AF280939">
    <property type="protein sequence ID" value="AAF86351.1"/>
    <property type="molecule type" value="Genomic_DNA"/>
</dbReference>
<dbReference type="EMBL" id="AL391143">
    <property type="protein sequence ID" value="CAC01740.1"/>
    <property type="molecule type" value="Genomic_DNA"/>
</dbReference>
<dbReference type="EMBL" id="CP002688">
    <property type="protein sequence ID" value="AED92158.1"/>
    <property type="molecule type" value="Genomic_DNA"/>
</dbReference>
<dbReference type="PIR" id="T51519">
    <property type="entry name" value="T51519"/>
</dbReference>
<dbReference type="RefSeq" id="NP_197045.1">
    <molecule id="O65718-1"/>
    <property type="nucleotide sequence ID" value="NM_121545.5"/>
</dbReference>
<dbReference type="FunCoup" id="O65718">
    <property type="interactions" value="324"/>
</dbReference>
<dbReference type="STRING" id="3702.O65718"/>
<dbReference type="TCDB" id="1.A.1.5.6">
    <property type="family name" value="the voltage-gated ion channel (vic) superfamily"/>
</dbReference>
<dbReference type="iPTMnet" id="O65718"/>
<dbReference type="PaxDb" id="3702-AT5G15410.1"/>
<dbReference type="ProteomicsDB" id="220539">
    <molecule id="O65718-1"/>
</dbReference>
<dbReference type="EnsemblPlants" id="AT5G15410.1">
    <molecule id="O65718-1"/>
    <property type="protein sequence ID" value="AT5G15410.1"/>
    <property type="gene ID" value="AT5G15410"/>
</dbReference>
<dbReference type="GeneID" id="831393"/>
<dbReference type="Gramene" id="AT5G15410.1">
    <molecule id="O65718-1"/>
    <property type="protein sequence ID" value="AT5G15410.1"/>
    <property type="gene ID" value="AT5G15410"/>
</dbReference>
<dbReference type="KEGG" id="ath:AT5G15410"/>
<dbReference type="Araport" id="AT5G15410"/>
<dbReference type="TAIR" id="AT5G15410">
    <property type="gene designation" value="DND1"/>
</dbReference>
<dbReference type="eggNOG" id="KOG0498">
    <property type="taxonomic scope" value="Eukaryota"/>
</dbReference>
<dbReference type="InParanoid" id="O65718"/>
<dbReference type="OMA" id="TEQFRYK"/>
<dbReference type="OrthoDB" id="421226at2759"/>
<dbReference type="PhylomeDB" id="O65718"/>
<dbReference type="PRO" id="PR:O65718"/>
<dbReference type="Proteomes" id="UP000006548">
    <property type="component" value="Chromosome 5"/>
</dbReference>
<dbReference type="ExpressionAtlas" id="O65718">
    <property type="expression patterns" value="baseline and differential"/>
</dbReference>
<dbReference type="GO" id="GO:0005886">
    <property type="term" value="C:plasma membrane"/>
    <property type="evidence" value="ECO:0007669"/>
    <property type="project" value="UniProtKB-SubCell"/>
</dbReference>
<dbReference type="GO" id="GO:0005262">
    <property type="term" value="F:calcium channel activity"/>
    <property type="evidence" value="ECO:0000314"/>
    <property type="project" value="TAIR"/>
</dbReference>
<dbReference type="GO" id="GO:0005516">
    <property type="term" value="F:calmodulin binding"/>
    <property type="evidence" value="ECO:0000304"/>
    <property type="project" value="TAIR"/>
</dbReference>
<dbReference type="GO" id="GO:0030552">
    <property type="term" value="F:cAMP binding"/>
    <property type="evidence" value="ECO:0007669"/>
    <property type="project" value="UniProtKB-KW"/>
</dbReference>
<dbReference type="GO" id="GO:0030553">
    <property type="term" value="F:cGMP binding"/>
    <property type="evidence" value="ECO:0007669"/>
    <property type="project" value="UniProtKB-KW"/>
</dbReference>
<dbReference type="GO" id="GO:0005222">
    <property type="term" value="F:intracellularly cAMP-activated cation channel activity"/>
    <property type="evidence" value="ECO:0000314"/>
    <property type="project" value="TAIR"/>
</dbReference>
<dbReference type="GO" id="GO:0005221">
    <property type="term" value="F:intracellularly cyclic nucleotide-activated monoatomic cation channel activity"/>
    <property type="evidence" value="ECO:0000315"/>
    <property type="project" value="TAIR"/>
</dbReference>
<dbReference type="GO" id="GO:0005242">
    <property type="term" value="F:inward rectifier potassium channel activity"/>
    <property type="evidence" value="ECO:0000316"/>
    <property type="project" value="TAIR"/>
</dbReference>
<dbReference type="GO" id="GO:0070509">
    <property type="term" value="P:calcium ion import"/>
    <property type="evidence" value="ECO:0000314"/>
    <property type="project" value="TAIR"/>
</dbReference>
<dbReference type="GO" id="GO:0006952">
    <property type="term" value="P:defense response"/>
    <property type="evidence" value="ECO:0000304"/>
    <property type="project" value="TAIR"/>
</dbReference>
<dbReference type="GO" id="GO:0007263">
    <property type="term" value="P:nitric oxide mediated signal transduction"/>
    <property type="evidence" value="ECO:0000315"/>
    <property type="project" value="TAIR"/>
</dbReference>
<dbReference type="GO" id="GO:0009626">
    <property type="term" value="P:plant-type hypersensitive response"/>
    <property type="evidence" value="ECO:0000315"/>
    <property type="project" value="TAIR"/>
</dbReference>
<dbReference type="CDD" id="cd00038">
    <property type="entry name" value="CAP_ED"/>
    <property type="match status" value="1"/>
</dbReference>
<dbReference type="Gene3D" id="1.10.287.70">
    <property type="match status" value="1"/>
</dbReference>
<dbReference type="Gene3D" id="1.10.287.630">
    <property type="entry name" value="Helix hairpin bin"/>
    <property type="match status" value="1"/>
</dbReference>
<dbReference type="Gene3D" id="2.60.120.10">
    <property type="entry name" value="Jelly Rolls"/>
    <property type="match status" value="1"/>
</dbReference>
<dbReference type="InterPro" id="IPR000595">
    <property type="entry name" value="cNMP-bd_dom"/>
</dbReference>
<dbReference type="InterPro" id="IPR018490">
    <property type="entry name" value="cNMP-bd_dom_sf"/>
</dbReference>
<dbReference type="InterPro" id="IPR014710">
    <property type="entry name" value="RmlC-like_jellyroll"/>
</dbReference>
<dbReference type="PANTHER" id="PTHR45651">
    <property type="entry name" value="CYCLIC NUCLEOTIDE-GATED ION CHANNEL 15-RELATED-RELATED"/>
    <property type="match status" value="1"/>
</dbReference>
<dbReference type="PANTHER" id="PTHR45651:SF50">
    <property type="entry name" value="CYCLIC NUCLEOTIDE-GATED ION CHANNEL 2"/>
    <property type="match status" value="1"/>
</dbReference>
<dbReference type="Pfam" id="PF00027">
    <property type="entry name" value="cNMP_binding"/>
    <property type="match status" value="1"/>
</dbReference>
<dbReference type="SMART" id="SM00100">
    <property type="entry name" value="cNMP"/>
    <property type="match status" value="1"/>
</dbReference>
<dbReference type="SUPFAM" id="SSF51206">
    <property type="entry name" value="cAMP-binding domain-like"/>
    <property type="match status" value="1"/>
</dbReference>
<dbReference type="SUPFAM" id="SSF81324">
    <property type="entry name" value="Voltage-gated potassium channels"/>
    <property type="match status" value="1"/>
</dbReference>
<dbReference type="PROSITE" id="PS50042">
    <property type="entry name" value="CNMP_BINDING_3"/>
    <property type="match status" value="1"/>
</dbReference>
<gene>
    <name type="primary">CNGC2</name>
    <name type="synonym">DND1</name>
    <name type="ordered locus">At5g15410</name>
    <name type="ORF">T20K14_20</name>
</gene>